<name>Y796_METJA</name>
<reference key="1">
    <citation type="journal article" date="1996" name="Science">
        <title>Complete genome sequence of the methanogenic archaeon, Methanococcus jannaschii.</title>
        <authorList>
            <person name="Bult C.J."/>
            <person name="White O."/>
            <person name="Olsen G.J."/>
            <person name="Zhou L."/>
            <person name="Fleischmann R.D."/>
            <person name="Sutton G.G."/>
            <person name="Blake J.A."/>
            <person name="FitzGerald L.M."/>
            <person name="Clayton R.A."/>
            <person name="Gocayne J.D."/>
            <person name="Kerlavage A.R."/>
            <person name="Dougherty B.A."/>
            <person name="Tomb J.-F."/>
            <person name="Adams M.D."/>
            <person name="Reich C.I."/>
            <person name="Overbeek R."/>
            <person name="Kirkness E.F."/>
            <person name="Weinstock K.G."/>
            <person name="Merrick J.M."/>
            <person name="Glodek A."/>
            <person name="Scott J.L."/>
            <person name="Geoghagen N.S.M."/>
            <person name="Weidman J.F."/>
            <person name="Fuhrmann J.L."/>
            <person name="Nguyen D."/>
            <person name="Utterback T.R."/>
            <person name="Kelley J.M."/>
            <person name="Peterson J.D."/>
            <person name="Sadow P.W."/>
            <person name="Hanna M.C."/>
            <person name="Cotton M.D."/>
            <person name="Roberts K.M."/>
            <person name="Hurst M.A."/>
            <person name="Kaine B.P."/>
            <person name="Borodovsky M."/>
            <person name="Klenk H.-P."/>
            <person name="Fraser C.M."/>
            <person name="Smith H.O."/>
            <person name="Woese C.R."/>
            <person name="Venter J.C."/>
        </authorList>
    </citation>
    <scope>NUCLEOTIDE SEQUENCE [LARGE SCALE GENOMIC DNA]</scope>
    <source>
        <strain>ATCC 43067 / DSM 2661 / JAL-1 / JCM 10045 / NBRC 100440</strain>
    </source>
</reference>
<reference key="2">
    <citation type="journal article" date="2001" name="J. Biol. Chem.">
        <title>The crystal structure of the MJ0796 ATP-binding cassette. Implications for the structural consequences of ATP hydrolysis in the active site of an ABC transporter.</title>
        <authorList>
            <person name="Yuan Y.-R."/>
            <person name="Blecker S."/>
            <person name="Martsinkevich O."/>
            <person name="Millen L."/>
            <person name="Thomas P.J."/>
            <person name="Hunt J.F."/>
        </authorList>
    </citation>
    <scope>X-RAY CRYSTALLOGRAPHY (2.7 ANGSTROMS)</scope>
</reference>
<reference key="3">
    <citation type="journal article" date="2002" name="Mol. Cell">
        <title>ATP binding to the motor domain from an ABC transporter drives formation of a nucleotide sandwich dimer.</title>
        <authorList>
            <person name="Smith P.C."/>
            <person name="Karpowich N."/>
            <person name="Millen L."/>
            <person name="Moody J.E."/>
            <person name="Rosen J."/>
            <person name="Thomas P.J."/>
            <person name="Hunt J.F."/>
        </authorList>
    </citation>
    <scope>X-RAY CRYSTALLOGRAPHY (1.9 ANGSTROMS) OF MUTANT GLN-171</scope>
</reference>
<proteinExistence type="evidence at protein level"/>
<organism>
    <name type="scientific">Methanocaldococcus jannaschii (strain ATCC 43067 / DSM 2661 / JAL-1 / JCM 10045 / NBRC 100440)</name>
    <name type="common">Methanococcus jannaschii</name>
    <dbReference type="NCBI Taxonomy" id="243232"/>
    <lineage>
        <taxon>Archaea</taxon>
        <taxon>Methanobacteriati</taxon>
        <taxon>Methanobacteriota</taxon>
        <taxon>Methanomada group</taxon>
        <taxon>Methanococci</taxon>
        <taxon>Methanococcales</taxon>
        <taxon>Methanocaldococcaceae</taxon>
        <taxon>Methanocaldococcus</taxon>
    </lineage>
</organism>
<feature type="chain" id="PRO_0000093221" description="Uncharacterized ABC transporter ATP-binding protein MJ0796">
    <location>
        <begin position="1"/>
        <end position="235"/>
    </location>
</feature>
<feature type="domain" description="ABC transporter" evidence="1">
    <location>
        <begin position="2"/>
        <end position="235"/>
    </location>
</feature>
<feature type="binding site" evidence="1">
    <location>
        <begin position="38"/>
        <end position="45"/>
    </location>
    <ligand>
        <name>ATP</name>
        <dbReference type="ChEBI" id="CHEBI:30616"/>
    </ligand>
</feature>
<feature type="strand" evidence="3">
    <location>
        <begin position="2"/>
        <end position="13"/>
    </location>
</feature>
<feature type="strand" evidence="3">
    <location>
        <begin position="16"/>
        <end position="28"/>
    </location>
</feature>
<feature type="strand" evidence="3">
    <location>
        <begin position="33"/>
        <end position="37"/>
    </location>
</feature>
<feature type="helix" evidence="3">
    <location>
        <begin position="44"/>
        <end position="51"/>
    </location>
</feature>
<feature type="strand" evidence="3">
    <location>
        <begin position="58"/>
        <end position="64"/>
    </location>
</feature>
<feature type="helix" evidence="3">
    <location>
        <begin position="74"/>
        <end position="84"/>
    </location>
</feature>
<feature type="strand" evidence="3">
    <location>
        <begin position="85"/>
        <end position="88"/>
    </location>
</feature>
<feature type="helix" evidence="3">
    <location>
        <begin position="100"/>
        <end position="109"/>
    </location>
</feature>
<feature type="strand" evidence="3">
    <location>
        <begin position="112"/>
        <end position="114"/>
    </location>
</feature>
<feature type="helix" evidence="3">
    <location>
        <begin position="118"/>
        <end position="131"/>
    </location>
</feature>
<feature type="helix" evidence="3">
    <location>
        <begin position="136"/>
        <end position="138"/>
    </location>
</feature>
<feature type="helix" evidence="3">
    <location>
        <begin position="143"/>
        <end position="145"/>
    </location>
</feature>
<feature type="helix" evidence="3">
    <location>
        <begin position="148"/>
        <end position="160"/>
    </location>
</feature>
<feature type="strand" evidence="3">
    <location>
        <begin position="165"/>
        <end position="171"/>
    </location>
</feature>
<feature type="turn" evidence="3">
    <location>
        <begin position="172"/>
        <end position="175"/>
    </location>
</feature>
<feature type="helix" evidence="3">
    <location>
        <begin position="178"/>
        <end position="195"/>
    </location>
</feature>
<feature type="strand" evidence="3">
    <location>
        <begin position="198"/>
        <end position="202"/>
    </location>
</feature>
<feature type="helix" evidence="3">
    <location>
        <begin position="206"/>
        <end position="209"/>
    </location>
</feature>
<feature type="strand" evidence="3">
    <location>
        <begin position="212"/>
        <end position="219"/>
    </location>
</feature>
<feature type="strand" evidence="3">
    <location>
        <begin position="222"/>
        <end position="228"/>
    </location>
</feature>
<comment type="similarity">
    <text evidence="2">Belongs to the ABC transporter superfamily.</text>
</comment>
<protein>
    <recommendedName>
        <fullName>Uncharacterized ABC transporter ATP-binding protein MJ0796</fullName>
    </recommendedName>
</protein>
<keyword id="KW-0002">3D-structure</keyword>
<keyword id="KW-0067">ATP-binding</keyword>
<keyword id="KW-0547">Nucleotide-binding</keyword>
<keyword id="KW-1185">Reference proteome</keyword>
<keyword id="KW-0813">Transport</keyword>
<gene>
    <name type="ordered locus">MJ0796</name>
</gene>
<accession>Q58206</accession>
<dbReference type="EMBL" id="L77117">
    <property type="protein sequence ID" value="AAB98791.1"/>
    <property type="molecule type" value="Genomic_DNA"/>
</dbReference>
<dbReference type="PIR" id="D64399">
    <property type="entry name" value="D64399"/>
</dbReference>
<dbReference type="RefSeq" id="WP_010870305.1">
    <property type="nucleotide sequence ID" value="NC_000909.1"/>
</dbReference>
<dbReference type="PDB" id="1F3O">
    <property type="method" value="X-ray"/>
    <property type="resolution" value="2.70 A"/>
    <property type="chains" value="A=1-235"/>
</dbReference>
<dbReference type="PDB" id="1L2T">
    <property type="method" value="X-ray"/>
    <property type="resolution" value="1.90 A"/>
    <property type="chains" value="A/B=1-235"/>
</dbReference>
<dbReference type="PDB" id="3TIF">
    <property type="method" value="X-ray"/>
    <property type="resolution" value="1.80 A"/>
    <property type="chains" value="A/B=1-235"/>
</dbReference>
<dbReference type="PDBsum" id="1F3O"/>
<dbReference type="PDBsum" id="1L2T"/>
<dbReference type="PDBsum" id="3TIF"/>
<dbReference type="SMR" id="Q58206"/>
<dbReference type="FunCoup" id="Q58206">
    <property type="interactions" value="28"/>
</dbReference>
<dbReference type="STRING" id="243232.MJ_0796"/>
<dbReference type="TCDB" id="3.A.1.122.14">
    <property type="family name" value="the atp-binding cassette (abc) superfamily"/>
</dbReference>
<dbReference type="PaxDb" id="243232-MJ_0796"/>
<dbReference type="EnsemblBacteria" id="AAB98791">
    <property type="protein sequence ID" value="AAB98791"/>
    <property type="gene ID" value="MJ_0796"/>
</dbReference>
<dbReference type="GeneID" id="1451677"/>
<dbReference type="KEGG" id="mja:MJ_0796"/>
<dbReference type="eggNOG" id="arCOG00922">
    <property type="taxonomic scope" value="Archaea"/>
</dbReference>
<dbReference type="HOGENOM" id="CLU_000604_1_22_2"/>
<dbReference type="InParanoid" id="Q58206"/>
<dbReference type="OrthoDB" id="31298at2157"/>
<dbReference type="PhylomeDB" id="Q58206"/>
<dbReference type="EvolutionaryTrace" id="Q58206"/>
<dbReference type="PRO" id="PR:Q58206"/>
<dbReference type="Proteomes" id="UP000000805">
    <property type="component" value="Chromosome"/>
</dbReference>
<dbReference type="GO" id="GO:0005886">
    <property type="term" value="C:plasma membrane"/>
    <property type="evidence" value="ECO:0000318"/>
    <property type="project" value="GO_Central"/>
</dbReference>
<dbReference type="GO" id="GO:0005524">
    <property type="term" value="F:ATP binding"/>
    <property type="evidence" value="ECO:0007669"/>
    <property type="project" value="UniProtKB-KW"/>
</dbReference>
<dbReference type="GO" id="GO:0016887">
    <property type="term" value="F:ATP hydrolysis activity"/>
    <property type="evidence" value="ECO:0007669"/>
    <property type="project" value="InterPro"/>
</dbReference>
<dbReference type="GO" id="GO:0022857">
    <property type="term" value="F:transmembrane transporter activity"/>
    <property type="evidence" value="ECO:0000318"/>
    <property type="project" value="GO_Central"/>
</dbReference>
<dbReference type="GO" id="GO:0055085">
    <property type="term" value="P:transmembrane transport"/>
    <property type="evidence" value="ECO:0000318"/>
    <property type="project" value="GO_Central"/>
</dbReference>
<dbReference type="CDD" id="cd03255">
    <property type="entry name" value="ABC_MJ0796_LolCDE_FtsE"/>
    <property type="match status" value="1"/>
</dbReference>
<dbReference type="FunFam" id="3.40.50.300:FF:000032">
    <property type="entry name" value="Export ABC transporter ATP-binding protein"/>
    <property type="match status" value="1"/>
</dbReference>
<dbReference type="Gene3D" id="3.40.50.300">
    <property type="entry name" value="P-loop containing nucleotide triphosphate hydrolases"/>
    <property type="match status" value="1"/>
</dbReference>
<dbReference type="InterPro" id="IPR003593">
    <property type="entry name" value="AAA+_ATPase"/>
</dbReference>
<dbReference type="InterPro" id="IPR003439">
    <property type="entry name" value="ABC_transporter-like_ATP-bd"/>
</dbReference>
<dbReference type="InterPro" id="IPR017871">
    <property type="entry name" value="ABC_transporter-like_CS"/>
</dbReference>
<dbReference type="InterPro" id="IPR015854">
    <property type="entry name" value="ABC_transpr_LolD-like"/>
</dbReference>
<dbReference type="InterPro" id="IPR017911">
    <property type="entry name" value="MacB-like_ATP-bd"/>
</dbReference>
<dbReference type="InterPro" id="IPR027417">
    <property type="entry name" value="P-loop_NTPase"/>
</dbReference>
<dbReference type="PANTHER" id="PTHR24220:SF86">
    <property type="entry name" value="ABC TRANSPORTER ABCH.1"/>
    <property type="match status" value="1"/>
</dbReference>
<dbReference type="PANTHER" id="PTHR24220">
    <property type="entry name" value="IMPORT ATP-BINDING PROTEIN"/>
    <property type="match status" value="1"/>
</dbReference>
<dbReference type="Pfam" id="PF00005">
    <property type="entry name" value="ABC_tran"/>
    <property type="match status" value="1"/>
</dbReference>
<dbReference type="SMART" id="SM00382">
    <property type="entry name" value="AAA"/>
    <property type="match status" value="1"/>
</dbReference>
<dbReference type="SUPFAM" id="SSF52540">
    <property type="entry name" value="P-loop containing nucleoside triphosphate hydrolases"/>
    <property type="match status" value="1"/>
</dbReference>
<dbReference type="PROSITE" id="PS00211">
    <property type="entry name" value="ABC_TRANSPORTER_1"/>
    <property type="match status" value="1"/>
</dbReference>
<dbReference type="PROSITE" id="PS50893">
    <property type="entry name" value="ABC_TRANSPORTER_2"/>
    <property type="match status" value="1"/>
</dbReference>
<sequence>MIKLKNVTKTYKMGEEIIYALKNVNLNIKEGEFVSIMGPSGSGKSTMLNIIGCLDKPTEGEVYIDNIKTNDLDDDELTKIRRDKIGFVFQQFNLIPLLTALENVELPLIFKYRGAMSGEERRKRALECLKMAELEERFANHKPNQLSGGQQQRVAIARALANNPPIILADEPTGALDSKTGEKIMQLLKKLNEEDGKTVVVVTHDINVARFGERIIYLKDGEVEREEKLRGFDDR</sequence>
<evidence type="ECO:0000255" key="1">
    <source>
        <dbReference type="PROSITE-ProRule" id="PRU00434"/>
    </source>
</evidence>
<evidence type="ECO:0000305" key="2"/>
<evidence type="ECO:0007829" key="3">
    <source>
        <dbReference type="PDB" id="3TIF"/>
    </source>
</evidence>